<keyword id="KW-0963">Cytoplasm</keyword>
<keyword id="KW-0255">Endonuclease</keyword>
<keyword id="KW-0378">Hydrolase</keyword>
<keyword id="KW-0464">Manganese</keyword>
<keyword id="KW-0479">Metal-binding</keyword>
<keyword id="KW-0540">Nuclease</keyword>
<accession>Q8CPH6</accession>
<reference key="1">
    <citation type="journal article" date="2003" name="Mol. Microbiol.">
        <title>Genome-based analysis of virulence genes in a non-biofilm-forming Staphylococcus epidermidis strain (ATCC 12228).</title>
        <authorList>
            <person name="Zhang Y.-Q."/>
            <person name="Ren S.-X."/>
            <person name="Li H.-L."/>
            <person name="Wang Y.-X."/>
            <person name="Fu G."/>
            <person name="Yang J."/>
            <person name="Qin Z.-Q."/>
            <person name="Miao Y.-G."/>
            <person name="Wang W.-Y."/>
            <person name="Chen R.-S."/>
            <person name="Shen Y."/>
            <person name="Chen Z."/>
            <person name="Yuan Z.-H."/>
            <person name="Zhao G.-P."/>
            <person name="Qu D."/>
            <person name="Danchin A."/>
            <person name="Wen Y.-M."/>
        </authorList>
    </citation>
    <scope>NUCLEOTIDE SEQUENCE [LARGE SCALE GENOMIC DNA]</scope>
    <source>
        <strain>ATCC 12228 / FDA PCI 1200</strain>
    </source>
</reference>
<name>RNH2_STAES</name>
<dbReference type="EC" id="3.1.26.4" evidence="1"/>
<dbReference type="EMBL" id="AE015929">
    <property type="protein sequence ID" value="AAO04519.1"/>
    <property type="molecule type" value="Genomic_DNA"/>
</dbReference>
<dbReference type="RefSeq" id="NP_764477.1">
    <property type="nucleotide sequence ID" value="NC_004461.1"/>
</dbReference>
<dbReference type="RefSeq" id="WP_001829514.1">
    <property type="nucleotide sequence ID" value="NZ_WBME01000001.1"/>
</dbReference>
<dbReference type="SMR" id="Q8CPH6"/>
<dbReference type="KEGG" id="sep:SE_0922"/>
<dbReference type="PATRIC" id="fig|176280.10.peg.896"/>
<dbReference type="eggNOG" id="COG0164">
    <property type="taxonomic scope" value="Bacteria"/>
</dbReference>
<dbReference type="HOGENOM" id="CLU_036532_2_1_9"/>
<dbReference type="OrthoDB" id="9803420at2"/>
<dbReference type="Proteomes" id="UP000001411">
    <property type="component" value="Chromosome"/>
</dbReference>
<dbReference type="GO" id="GO:0005737">
    <property type="term" value="C:cytoplasm"/>
    <property type="evidence" value="ECO:0007669"/>
    <property type="project" value="UniProtKB-SubCell"/>
</dbReference>
<dbReference type="GO" id="GO:0032299">
    <property type="term" value="C:ribonuclease H2 complex"/>
    <property type="evidence" value="ECO:0007669"/>
    <property type="project" value="TreeGrafter"/>
</dbReference>
<dbReference type="GO" id="GO:0030145">
    <property type="term" value="F:manganese ion binding"/>
    <property type="evidence" value="ECO:0007669"/>
    <property type="project" value="UniProtKB-UniRule"/>
</dbReference>
<dbReference type="GO" id="GO:0003723">
    <property type="term" value="F:RNA binding"/>
    <property type="evidence" value="ECO:0007669"/>
    <property type="project" value="InterPro"/>
</dbReference>
<dbReference type="GO" id="GO:0004523">
    <property type="term" value="F:RNA-DNA hybrid ribonuclease activity"/>
    <property type="evidence" value="ECO:0007669"/>
    <property type="project" value="UniProtKB-UniRule"/>
</dbReference>
<dbReference type="GO" id="GO:0043137">
    <property type="term" value="P:DNA replication, removal of RNA primer"/>
    <property type="evidence" value="ECO:0007669"/>
    <property type="project" value="TreeGrafter"/>
</dbReference>
<dbReference type="GO" id="GO:0006298">
    <property type="term" value="P:mismatch repair"/>
    <property type="evidence" value="ECO:0007669"/>
    <property type="project" value="TreeGrafter"/>
</dbReference>
<dbReference type="CDD" id="cd07182">
    <property type="entry name" value="RNase_HII_bacteria_HII_like"/>
    <property type="match status" value="1"/>
</dbReference>
<dbReference type="FunFam" id="3.30.420.10:FF:000006">
    <property type="entry name" value="Ribonuclease HII"/>
    <property type="match status" value="1"/>
</dbReference>
<dbReference type="Gene3D" id="3.30.420.10">
    <property type="entry name" value="Ribonuclease H-like superfamily/Ribonuclease H"/>
    <property type="match status" value="1"/>
</dbReference>
<dbReference type="HAMAP" id="MF_00052_B">
    <property type="entry name" value="RNase_HII_B"/>
    <property type="match status" value="1"/>
</dbReference>
<dbReference type="InterPro" id="IPR022898">
    <property type="entry name" value="RNase_HII"/>
</dbReference>
<dbReference type="InterPro" id="IPR001352">
    <property type="entry name" value="RNase_HII/HIII"/>
</dbReference>
<dbReference type="InterPro" id="IPR024567">
    <property type="entry name" value="RNase_HII/HIII_dom"/>
</dbReference>
<dbReference type="InterPro" id="IPR012337">
    <property type="entry name" value="RNaseH-like_sf"/>
</dbReference>
<dbReference type="InterPro" id="IPR036397">
    <property type="entry name" value="RNaseH_sf"/>
</dbReference>
<dbReference type="NCBIfam" id="NF000594">
    <property type="entry name" value="PRK00015.1-1"/>
    <property type="match status" value="1"/>
</dbReference>
<dbReference type="NCBIfam" id="NF000595">
    <property type="entry name" value="PRK00015.1-3"/>
    <property type="match status" value="1"/>
</dbReference>
<dbReference type="PANTHER" id="PTHR10954">
    <property type="entry name" value="RIBONUCLEASE H2 SUBUNIT A"/>
    <property type="match status" value="1"/>
</dbReference>
<dbReference type="PANTHER" id="PTHR10954:SF18">
    <property type="entry name" value="RIBONUCLEASE HII"/>
    <property type="match status" value="1"/>
</dbReference>
<dbReference type="Pfam" id="PF01351">
    <property type="entry name" value="RNase_HII"/>
    <property type="match status" value="1"/>
</dbReference>
<dbReference type="SUPFAM" id="SSF53098">
    <property type="entry name" value="Ribonuclease H-like"/>
    <property type="match status" value="1"/>
</dbReference>
<dbReference type="PROSITE" id="PS51975">
    <property type="entry name" value="RNASE_H_2"/>
    <property type="match status" value="1"/>
</dbReference>
<feature type="chain" id="PRO_0000111627" description="Ribonuclease HII">
    <location>
        <begin position="1"/>
        <end position="256"/>
    </location>
</feature>
<feature type="domain" description="RNase H type-2" evidence="2">
    <location>
        <begin position="72"/>
        <end position="256"/>
    </location>
</feature>
<feature type="binding site" evidence="1">
    <location>
        <position position="78"/>
    </location>
    <ligand>
        <name>a divalent metal cation</name>
        <dbReference type="ChEBI" id="CHEBI:60240"/>
    </ligand>
</feature>
<feature type="binding site" evidence="1">
    <location>
        <position position="79"/>
    </location>
    <ligand>
        <name>a divalent metal cation</name>
        <dbReference type="ChEBI" id="CHEBI:60240"/>
    </ligand>
</feature>
<feature type="binding site" evidence="1">
    <location>
        <position position="170"/>
    </location>
    <ligand>
        <name>a divalent metal cation</name>
        <dbReference type="ChEBI" id="CHEBI:60240"/>
    </ligand>
</feature>
<sequence>MSLTIKEIKEKLSRIETLEELHKHEANNDSRKGVINAIKSREKNILKQQALEEHYLSMNQYENNIMSSNRDALICGIDEVGRGPLAGPVVACAVILEKNHHYIGLDDSKKVSPKNRARLNQNLKENVYQYAYGIASSVEIDELNIYRATQLAMLRAINQLDVTPTHLLIDAMTLDIDIPQTSIIKGDAKSVSIAAASIMAKEYRDQYMRQLSKQFPEYGFDKNAGYGTKQHLKAIDQVGIINEHRQSFEPIKSMMK</sequence>
<organism>
    <name type="scientific">Staphylococcus epidermidis (strain ATCC 12228 / FDA PCI 1200)</name>
    <dbReference type="NCBI Taxonomy" id="176280"/>
    <lineage>
        <taxon>Bacteria</taxon>
        <taxon>Bacillati</taxon>
        <taxon>Bacillota</taxon>
        <taxon>Bacilli</taxon>
        <taxon>Bacillales</taxon>
        <taxon>Staphylococcaceae</taxon>
        <taxon>Staphylococcus</taxon>
    </lineage>
</organism>
<gene>
    <name evidence="1" type="primary">rnhB</name>
    <name type="ordered locus">SE_0922</name>
</gene>
<proteinExistence type="inferred from homology"/>
<protein>
    <recommendedName>
        <fullName evidence="1">Ribonuclease HII</fullName>
        <shortName evidence="1">RNase HII</shortName>
        <ecNumber evidence="1">3.1.26.4</ecNumber>
    </recommendedName>
</protein>
<comment type="function">
    <text evidence="1">Endonuclease that specifically degrades the RNA of RNA-DNA hybrids.</text>
</comment>
<comment type="catalytic activity">
    <reaction evidence="1">
        <text>Endonucleolytic cleavage to 5'-phosphomonoester.</text>
        <dbReference type="EC" id="3.1.26.4"/>
    </reaction>
</comment>
<comment type="cofactor">
    <cofactor evidence="1">
        <name>Mn(2+)</name>
        <dbReference type="ChEBI" id="CHEBI:29035"/>
    </cofactor>
    <cofactor evidence="1">
        <name>Mg(2+)</name>
        <dbReference type="ChEBI" id="CHEBI:18420"/>
    </cofactor>
    <text evidence="1">Manganese or magnesium. Binds 1 divalent metal ion per monomer in the absence of substrate. May bind a second metal ion after substrate binding.</text>
</comment>
<comment type="subcellular location">
    <subcellularLocation>
        <location evidence="1">Cytoplasm</location>
    </subcellularLocation>
</comment>
<comment type="similarity">
    <text evidence="1">Belongs to the RNase HII family.</text>
</comment>
<evidence type="ECO:0000255" key="1">
    <source>
        <dbReference type="HAMAP-Rule" id="MF_00052"/>
    </source>
</evidence>
<evidence type="ECO:0000255" key="2">
    <source>
        <dbReference type="PROSITE-ProRule" id="PRU01319"/>
    </source>
</evidence>